<protein>
    <recommendedName>
        <fullName evidence="1">UPF0178 protein YPDSF_2138</fullName>
    </recommendedName>
</protein>
<evidence type="ECO:0000255" key="1">
    <source>
        <dbReference type="HAMAP-Rule" id="MF_00489"/>
    </source>
</evidence>
<feature type="chain" id="PRO_1000014458" description="UPF0178 protein YPDSF_2138">
    <location>
        <begin position="1"/>
        <end position="152"/>
    </location>
</feature>
<proteinExistence type="inferred from homology"/>
<gene>
    <name type="ordered locus">YPDSF_2138</name>
</gene>
<accession>A4TMK3</accession>
<comment type="similarity">
    <text evidence="1">Belongs to the UPF0178 family.</text>
</comment>
<name>Y2138_YERPP</name>
<reference key="1">
    <citation type="submission" date="2007-02" db="EMBL/GenBank/DDBJ databases">
        <title>Complete sequence of chromosome of Yersinia pestis Pestoides F.</title>
        <authorList>
            <consortium name="US DOE Joint Genome Institute"/>
            <person name="Copeland A."/>
            <person name="Lucas S."/>
            <person name="Lapidus A."/>
            <person name="Barry K."/>
            <person name="Detter J.C."/>
            <person name="Glavina del Rio T."/>
            <person name="Hammon N."/>
            <person name="Israni S."/>
            <person name="Dalin E."/>
            <person name="Tice H."/>
            <person name="Pitluck S."/>
            <person name="Di Bartolo G."/>
            <person name="Chain P."/>
            <person name="Malfatti S."/>
            <person name="Shin M."/>
            <person name="Vergez L."/>
            <person name="Schmutz J."/>
            <person name="Larimer F."/>
            <person name="Land M."/>
            <person name="Hauser L."/>
            <person name="Worsham P."/>
            <person name="Chu M."/>
            <person name="Bearden S."/>
            <person name="Garcia E."/>
            <person name="Richardson P."/>
        </authorList>
    </citation>
    <scope>NUCLEOTIDE SEQUENCE [LARGE SCALE GENOMIC DNA]</scope>
    <source>
        <strain>Pestoides F</strain>
    </source>
</reference>
<dbReference type="EMBL" id="CP000668">
    <property type="protein sequence ID" value="ABP40515.1"/>
    <property type="molecule type" value="Genomic_DNA"/>
</dbReference>
<dbReference type="RefSeq" id="WP_002208527.1">
    <property type="nucleotide sequence ID" value="NZ_CP009715.1"/>
</dbReference>
<dbReference type="KEGG" id="ypp:YPDSF_2138"/>
<dbReference type="PATRIC" id="fig|386656.14.peg.3616"/>
<dbReference type="CDD" id="cd18720">
    <property type="entry name" value="PIN_YqxD-like"/>
    <property type="match status" value="1"/>
</dbReference>
<dbReference type="HAMAP" id="MF_00489">
    <property type="entry name" value="UPF0178"/>
    <property type="match status" value="1"/>
</dbReference>
<dbReference type="InterPro" id="IPR003791">
    <property type="entry name" value="UPF0178"/>
</dbReference>
<dbReference type="NCBIfam" id="NF001095">
    <property type="entry name" value="PRK00124.1"/>
    <property type="match status" value="1"/>
</dbReference>
<dbReference type="PANTHER" id="PTHR35146">
    <property type="entry name" value="UPF0178 PROTEIN YAII"/>
    <property type="match status" value="1"/>
</dbReference>
<dbReference type="PANTHER" id="PTHR35146:SF1">
    <property type="entry name" value="UPF0178 PROTEIN YAII"/>
    <property type="match status" value="1"/>
</dbReference>
<dbReference type="Pfam" id="PF02639">
    <property type="entry name" value="DUF188"/>
    <property type="match status" value="1"/>
</dbReference>
<sequence>MQIWVDADACPNVIKEVLFRAADRTGMMVTLVANQPLKTPPSKFIRTVQVASGFDVADNEIVQRVEKNDLVITADIPLAAEVIEKGGIALNPRGERYTPDTIRERLNMRDFMDTMRASGIQTGGPNTLNQRDRQQFANELDKWLQQARNQAK</sequence>
<organism>
    <name type="scientific">Yersinia pestis (strain Pestoides F)</name>
    <dbReference type="NCBI Taxonomy" id="386656"/>
    <lineage>
        <taxon>Bacteria</taxon>
        <taxon>Pseudomonadati</taxon>
        <taxon>Pseudomonadota</taxon>
        <taxon>Gammaproteobacteria</taxon>
        <taxon>Enterobacterales</taxon>
        <taxon>Yersiniaceae</taxon>
        <taxon>Yersinia</taxon>
    </lineage>
</organism>